<reference key="1">
    <citation type="journal article" date="2005" name="Nature">
        <title>The genome of the social amoeba Dictyostelium discoideum.</title>
        <authorList>
            <person name="Eichinger L."/>
            <person name="Pachebat J.A."/>
            <person name="Gloeckner G."/>
            <person name="Rajandream M.A."/>
            <person name="Sucgang R."/>
            <person name="Berriman M."/>
            <person name="Song J."/>
            <person name="Olsen R."/>
            <person name="Szafranski K."/>
            <person name="Xu Q."/>
            <person name="Tunggal B."/>
            <person name="Kummerfeld S."/>
            <person name="Madera M."/>
            <person name="Konfortov B.A."/>
            <person name="Rivero F."/>
            <person name="Bankier A.T."/>
            <person name="Lehmann R."/>
            <person name="Hamlin N."/>
            <person name="Davies R."/>
            <person name="Gaudet P."/>
            <person name="Fey P."/>
            <person name="Pilcher K."/>
            <person name="Chen G."/>
            <person name="Saunders D."/>
            <person name="Sodergren E.J."/>
            <person name="Davis P."/>
            <person name="Kerhornou A."/>
            <person name="Nie X."/>
            <person name="Hall N."/>
            <person name="Anjard C."/>
            <person name="Hemphill L."/>
            <person name="Bason N."/>
            <person name="Farbrother P."/>
            <person name="Desany B."/>
            <person name="Just E."/>
            <person name="Morio T."/>
            <person name="Rost R."/>
            <person name="Churcher C.M."/>
            <person name="Cooper J."/>
            <person name="Haydock S."/>
            <person name="van Driessche N."/>
            <person name="Cronin A."/>
            <person name="Goodhead I."/>
            <person name="Muzny D.M."/>
            <person name="Mourier T."/>
            <person name="Pain A."/>
            <person name="Lu M."/>
            <person name="Harper D."/>
            <person name="Lindsay R."/>
            <person name="Hauser H."/>
            <person name="James K.D."/>
            <person name="Quiles M."/>
            <person name="Madan Babu M."/>
            <person name="Saito T."/>
            <person name="Buchrieser C."/>
            <person name="Wardroper A."/>
            <person name="Felder M."/>
            <person name="Thangavelu M."/>
            <person name="Johnson D."/>
            <person name="Knights A."/>
            <person name="Loulseged H."/>
            <person name="Mungall K.L."/>
            <person name="Oliver K."/>
            <person name="Price C."/>
            <person name="Quail M.A."/>
            <person name="Urushihara H."/>
            <person name="Hernandez J."/>
            <person name="Rabbinowitsch E."/>
            <person name="Steffen D."/>
            <person name="Sanders M."/>
            <person name="Ma J."/>
            <person name="Kohara Y."/>
            <person name="Sharp S."/>
            <person name="Simmonds M.N."/>
            <person name="Spiegler S."/>
            <person name="Tivey A."/>
            <person name="Sugano S."/>
            <person name="White B."/>
            <person name="Walker D."/>
            <person name="Woodward J.R."/>
            <person name="Winckler T."/>
            <person name="Tanaka Y."/>
            <person name="Shaulsky G."/>
            <person name="Schleicher M."/>
            <person name="Weinstock G.M."/>
            <person name="Rosenthal A."/>
            <person name="Cox E.C."/>
            <person name="Chisholm R.L."/>
            <person name="Gibbs R.A."/>
            <person name="Loomis W.F."/>
            <person name="Platzer M."/>
            <person name="Kay R.R."/>
            <person name="Williams J.G."/>
            <person name="Dear P.H."/>
            <person name="Noegel A.A."/>
            <person name="Barrell B.G."/>
            <person name="Kuspa A."/>
        </authorList>
    </citation>
    <scope>NUCLEOTIDE SEQUENCE [LARGE SCALE GENOMIC DNA]</scope>
    <source>
        <strain>AX4</strain>
    </source>
</reference>
<keyword id="KW-0175">Coiled coil</keyword>
<keyword id="KW-1185">Reference proteome</keyword>
<name>MYBV_DICDI</name>
<protein>
    <recommendedName>
        <fullName>Myb-like protein V</fullName>
    </recommendedName>
</protein>
<gene>
    <name type="primary">mybV</name>
    <name type="ORF">DDB_G0279281</name>
</gene>
<feature type="chain" id="PRO_0000329394" description="Myb-like protein V">
    <location>
        <begin position="1"/>
        <end position="803"/>
    </location>
</feature>
<feature type="domain" description="Myb-like" evidence="2">
    <location>
        <begin position="332"/>
        <end position="379"/>
    </location>
</feature>
<feature type="region of interest" description="Disordered" evidence="3">
    <location>
        <begin position="237"/>
        <end position="333"/>
    </location>
</feature>
<feature type="region of interest" description="Disordered" evidence="3">
    <location>
        <begin position="429"/>
        <end position="803"/>
    </location>
</feature>
<feature type="coiled-coil region" evidence="1">
    <location>
        <begin position="258"/>
        <end position="323"/>
    </location>
</feature>
<feature type="coiled-coil region" evidence="1">
    <location>
        <begin position="400"/>
        <end position="429"/>
    </location>
</feature>
<feature type="coiled-coil region" evidence="1">
    <location>
        <begin position="463"/>
        <end position="496"/>
    </location>
</feature>
<feature type="coiled-coil region" evidence="1">
    <location>
        <begin position="573"/>
        <end position="616"/>
    </location>
</feature>
<feature type="compositionally biased region" description="Acidic residues" evidence="3">
    <location>
        <begin position="271"/>
        <end position="294"/>
    </location>
</feature>
<feature type="compositionally biased region" description="Low complexity" evidence="3">
    <location>
        <begin position="295"/>
        <end position="315"/>
    </location>
</feature>
<feature type="compositionally biased region" description="Polar residues" evidence="3">
    <location>
        <begin position="429"/>
        <end position="438"/>
    </location>
</feature>
<feature type="compositionally biased region" description="Acidic residues" evidence="3">
    <location>
        <begin position="448"/>
        <end position="480"/>
    </location>
</feature>
<feature type="compositionally biased region" description="Acidic residues" evidence="3">
    <location>
        <begin position="510"/>
        <end position="533"/>
    </location>
</feature>
<feature type="compositionally biased region" description="Basic residues" evidence="3">
    <location>
        <begin position="537"/>
        <end position="553"/>
    </location>
</feature>
<feature type="compositionally biased region" description="Basic residues" evidence="3">
    <location>
        <begin position="568"/>
        <end position="577"/>
    </location>
</feature>
<feature type="compositionally biased region" description="Acidic residues" evidence="3">
    <location>
        <begin position="586"/>
        <end position="609"/>
    </location>
</feature>
<feature type="compositionally biased region" description="Low complexity" evidence="3">
    <location>
        <begin position="625"/>
        <end position="636"/>
    </location>
</feature>
<feature type="compositionally biased region" description="Low complexity" evidence="3">
    <location>
        <begin position="666"/>
        <end position="733"/>
    </location>
</feature>
<feature type="compositionally biased region" description="Basic and acidic residues" evidence="3">
    <location>
        <begin position="786"/>
        <end position="795"/>
    </location>
</feature>
<dbReference type="EMBL" id="AAFI02000030">
    <property type="protein sequence ID" value="EAL67789.2"/>
    <property type="molecule type" value="Genomic_DNA"/>
</dbReference>
<dbReference type="RefSeq" id="XP_641769.2">
    <property type="nucleotide sequence ID" value="XM_636677.2"/>
</dbReference>
<dbReference type="STRING" id="44689.Q54X08"/>
<dbReference type="GlyGen" id="Q54X08">
    <property type="glycosylation" value="2 sites"/>
</dbReference>
<dbReference type="PaxDb" id="44689-DDB0220619"/>
<dbReference type="EnsemblProtists" id="EAL67789">
    <property type="protein sequence ID" value="EAL67789"/>
    <property type="gene ID" value="DDB_G0279281"/>
</dbReference>
<dbReference type="GeneID" id="8621967"/>
<dbReference type="KEGG" id="ddi:DDB_G0279281"/>
<dbReference type="dictyBase" id="DDB_G0279281">
    <property type="gene designation" value="mybV"/>
</dbReference>
<dbReference type="VEuPathDB" id="AmoebaDB:DDB_G0279281"/>
<dbReference type="eggNOG" id="ENOG502RIE7">
    <property type="taxonomic scope" value="Eukaryota"/>
</dbReference>
<dbReference type="HOGENOM" id="CLU_350736_0_0_1"/>
<dbReference type="InParanoid" id="Q54X08"/>
<dbReference type="OMA" id="NIENFLM"/>
<dbReference type="PRO" id="PR:Q54X08"/>
<dbReference type="Proteomes" id="UP000002195">
    <property type="component" value="Chromosome 3"/>
</dbReference>
<dbReference type="CDD" id="cd11660">
    <property type="entry name" value="SANT_TRF"/>
    <property type="match status" value="1"/>
</dbReference>
<dbReference type="Gene3D" id="1.10.10.60">
    <property type="entry name" value="Homeodomain-like"/>
    <property type="match status" value="1"/>
</dbReference>
<dbReference type="InterPro" id="IPR009057">
    <property type="entry name" value="Homeodomain-like_sf"/>
</dbReference>
<dbReference type="InterPro" id="IPR001005">
    <property type="entry name" value="SANT/Myb"/>
</dbReference>
<dbReference type="PANTHER" id="PTHR16148:SF14">
    <property type="entry name" value="MYND-TYPE DOMAIN-CONTAINING PROTEIN"/>
    <property type="match status" value="1"/>
</dbReference>
<dbReference type="PANTHER" id="PTHR16148">
    <property type="entry name" value="NF-KAPPA-B-REPRESSING FACTOR-RELATED"/>
    <property type="match status" value="1"/>
</dbReference>
<dbReference type="SUPFAM" id="SSF46689">
    <property type="entry name" value="Homeodomain-like"/>
    <property type="match status" value="1"/>
</dbReference>
<dbReference type="PROSITE" id="PS50090">
    <property type="entry name" value="MYB_LIKE"/>
    <property type="match status" value="1"/>
</dbReference>
<sequence length="803" mass="93092">MDTSQDIVIADSNTTDNVEVRSISPRVAAIFDDIYYFFYKEIDIEFTRYTDNKLISERMYGKRIDFFISILYITRNIIESYNNVELLKCFFKMLNHCSKPNENIENFLMKLFTYLHSDSILDNIEIIRALRDNKLKIRRETQDYLNQILDKFYKKPKEAEERDGDDGLPMEFVRQDTLSKLFREIYNDIRDLLPEPIQVRHLLSRNIDGTFKLKEVLFYEFDRVSEDHWFYDDGKQSNIYSPEEINNNTNNKNSVLLDANDKNENNNNNNDDADDAAADDADDADDDDMDDESDSNNNNKNSNNKNSNNKNSNENNKNKRTKSSSKSPQLPGLWTDEECRSLIKAVMIIGHRWIKIKEDYYSTSKRKPSQLKDKMRSLRKRYGDIKNIAIAYFTKAEIIEIEKLAVLFQQKEEAQKLAKEKIDSLSNIKSTSNTSAASGHNKGKNENNDSDEEVDQDSDNDSNNEDNQNESESENEDENDNNEKEKEKRNKKNSAVPPAPAPPKKLKPIEEEESDEEHNDSEEDSQEDSEENEYIIKQKRKSNQIKSSPKKLKTNQSVDKSEDVNQSHKSKLKSKPQRKVEKEESEKEESEEEESEEEEEEDDEDYESEEDKKKKKSKKTPSNQTSTHTTTTTTTTRKSNTKPIVVSSEEDSSDEEEKRRTKTLSKKSNQTPTTPTKKPSQTPTTPTKKSNQTPTTPTKKPSQTPITPTKKPNQTPTTPTKKSSQTPITPTKKSTNRPKSIEEEENEQEEQHEKNQNKPLKKRVSEDWSNSSDKTSNKRFKSPETLNKDSKENKKTISNSRRK</sequence>
<evidence type="ECO:0000255" key="1"/>
<evidence type="ECO:0000255" key="2">
    <source>
        <dbReference type="PROSITE-ProRule" id="PRU00133"/>
    </source>
</evidence>
<evidence type="ECO:0000256" key="3">
    <source>
        <dbReference type="SAM" id="MobiDB-lite"/>
    </source>
</evidence>
<organism>
    <name type="scientific">Dictyostelium discoideum</name>
    <name type="common">Social amoeba</name>
    <dbReference type="NCBI Taxonomy" id="44689"/>
    <lineage>
        <taxon>Eukaryota</taxon>
        <taxon>Amoebozoa</taxon>
        <taxon>Evosea</taxon>
        <taxon>Eumycetozoa</taxon>
        <taxon>Dictyostelia</taxon>
        <taxon>Dictyosteliales</taxon>
        <taxon>Dictyosteliaceae</taxon>
        <taxon>Dictyostelium</taxon>
    </lineage>
</organism>
<proteinExistence type="predicted"/>
<accession>Q54X08</accession>